<dbReference type="EMBL" id="L78442">
    <property type="status" value="NOT_ANNOTATED_CDS"/>
    <property type="molecule type" value="Genomic_DNA"/>
</dbReference>
<dbReference type="EMBL" id="BC136907">
    <property type="protein sequence ID" value="AAI36908.1"/>
    <property type="molecule type" value="mRNA"/>
</dbReference>
<dbReference type="EMBL" id="BC136908">
    <property type="protein sequence ID" value="AAI36909.1"/>
    <property type="molecule type" value="mRNA"/>
</dbReference>
<dbReference type="EMBL" id="AF399574">
    <property type="protein sequence ID" value="AAK95059.1"/>
    <property type="molecule type" value="Genomic_DNA"/>
</dbReference>
<dbReference type="EMBL" id="BK004223">
    <property type="protein sequence ID" value="DAA04621.1"/>
    <property type="molecule type" value="Genomic_DNA"/>
</dbReference>
<dbReference type="RefSeq" id="NP_001004195.2">
    <property type="nucleotide sequence ID" value="NM_001004195.2"/>
</dbReference>
<dbReference type="SMR" id="Q96R69"/>
<dbReference type="STRING" id="9606.ENSP00000317482"/>
<dbReference type="iPTMnet" id="Q96R69"/>
<dbReference type="PhosphoSitePlus" id="Q96R69"/>
<dbReference type="BioMuta" id="OR4F4"/>
<dbReference type="DMDM" id="38372849"/>
<dbReference type="PaxDb" id="9606-ENSP00000317482"/>
<dbReference type="PeptideAtlas" id="Q96R69"/>
<dbReference type="Antibodypedia" id="56270">
    <property type="antibodies" value="56 antibodies from 18 providers"/>
</dbReference>
<dbReference type="DNASU" id="26682"/>
<dbReference type="UCSC" id="uc002cdf.2">
    <property type="organism name" value="human"/>
</dbReference>
<dbReference type="AGR" id="HGNC:8301"/>
<dbReference type="GeneCards" id="OR4F4"/>
<dbReference type="HGNC" id="HGNC:8301">
    <property type="gene designation" value="OR4F4"/>
</dbReference>
<dbReference type="neXtProt" id="NX_Q96R69"/>
<dbReference type="PharmGKB" id="PA32290"/>
<dbReference type="VEuPathDB" id="HostDB:ENSG00000177693"/>
<dbReference type="eggNOG" id="ENOG502SKZV">
    <property type="taxonomic scope" value="Eukaryota"/>
</dbReference>
<dbReference type="HOGENOM" id="CLU_012526_8_1_1"/>
<dbReference type="InParanoid" id="Q96R69"/>
<dbReference type="OMA" id="TWETNHS"/>
<dbReference type="OrthoDB" id="10254436at2759"/>
<dbReference type="PAN-GO" id="Q96R69">
    <property type="GO annotations" value="2 GO annotations based on evolutionary models"/>
</dbReference>
<dbReference type="PhylomeDB" id="Q96R69"/>
<dbReference type="TreeFam" id="TF337251"/>
<dbReference type="PathwayCommons" id="Q96R69"/>
<dbReference type="Reactome" id="R-HSA-9752946">
    <property type="pathway name" value="Expression and translocation of olfactory receptors"/>
</dbReference>
<dbReference type="BioGRID-ORCS" id="26682">
    <property type="hits" value="357 hits in 574 CRISPR screens"/>
</dbReference>
<dbReference type="GenomeRNAi" id="26682"/>
<dbReference type="Pharos" id="Q96R69">
    <property type="development level" value="Tdark"/>
</dbReference>
<dbReference type="PRO" id="PR:Q96R69"/>
<dbReference type="Proteomes" id="UP000005640">
    <property type="component" value="Unplaced"/>
</dbReference>
<dbReference type="RNAct" id="Q96R69">
    <property type="molecule type" value="protein"/>
</dbReference>
<dbReference type="GO" id="GO:0005886">
    <property type="term" value="C:plasma membrane"/>
    <property type="evidence" value="ECO:0007669"/>
    <property type="project" value="UniProtKB-SubCell"/>
</dbReference>
<dbReference type="GO" id="GO:0004930">
    <property type="term" value="F:G protein-coupled receptor activity"/>
    <property type="evidence" value="ECO:0007669"/>
    <property type="project" value="UniProtKB-KW"/>
</dbReference>
<dbReference type="GO" id="GO:0004984">
    <property type="term" value="F:olfactory receptor activity"/>
    <property type="evidence" value="ECO:0000318"/>
    <property type="project" value="GO_Central"/>
</dbReference>
<dbReference type="CDD" id="cd15226">
    <property type="entry name" value="7tmA_OR4-like"/>
    <property type="match status" value="1"/>
</dbReference>
<dbReference type="FunFam" id="1.20.1070.10:FF:000012">
    <property type="entry name" value="Olfactory receptor"/>
    <property type="match status" value="1"/>
</dbReference>
<dbReference type="Gene3D" id="1.20.1070.10">
    <property type="entry name" value="Rhodopsin 7-helix transmembrane proteins"/>
    <property type="match status" value="1"/>
</dbReference>
<dbReference type="InterPro" id="IPR000276">
    <property type="entry name" value="GPCR_Rhodpsn"/>
</dbReference>
<dbReference type="InterPro" id="IPR017452">
    <property type="entry name" value="GPCR_Rhodpsn_7TM"/>
</dbReference>
<dbReference type="InterPro" id="IPR000725">
    <property type="entry name" value="Olfact_rcpt"/>
</dbReference>
<dbReference type="InterPro" id="IPR050427">
    <property type="entry name" value="Olfactory_Receptors"/>
</dbReference>
<dbReference type="PANTHER" id="PTHR48002">
    <property type="entry name" value="OLFACTORY RECEPTOR"/>
    <property type="match status" value="1"/>
</dbReference>
<dbReference type="Pfam" id="PF13853">
    <property type="entry name" value="7tm_4"/>
    <property type="match status" value="1"/>
</dbReference>
<dbReference type="PRINTS" id="PR00237">
    <property type="entry name" value="GPCRRHODOPSN"/>
</dbReference>
<dbReference type="PRINTS" id="PR00245">
    <property type="entry name" value="OLFACTORYR"/>
</dbReference>
<dbReference type="SUPFAM" id="SSF81321">
    <property type="entry name" value="Family A G protein-coupled receptor-like"/>
    <property type="match status" value="1"/>
</dbReference>
<dbReference type="PROSITE" id="PS00237">
    <property type="entry name" value="G_PROTEIN_RECEP_F1_1"/>
    <property type="match status" value="1"/>
</dbReference>
<dbReference type="PROSITE" id="PS50262">
    <property type="entry name" value="G_PROTEIN_RECEP_F1_2"/>
    <property type="match status" value="1"/>
</dbReference>
<comment type="function">
    <text evidence="3">Odorant receptor.</text>
</comment>
<comment type="subcellular location">
    <subcellularLocation>
        <location>Cell membrane</location>
        <topology>Multi-pass membrane protein</topology>
    </subcellularLocation>
</comment>
<comment type="similarity">
    <text evidence="2">Belongs to the G-protein coupled receptor 1 family.</text>
</comment>
<comment type="online information" name="Human Olfactory Receptor Data Exploratorium (HORDE)">
    <link uri="http://genome.weizmann.ac.il/horde/card/index/symbol:OR4F4"/>
</comment>
<accession>Q96R69</accession>
<accession>B2RNI5</accession>
<accession>Q6IFN9</accession>
<sequence>MVTEFIFLGLSDSQELQTFLFMLFFVFYGGIVFGNLLIVITVVSDSHLHSPMYFLLANLSLIDLSLSSVTAPKMITDFFSQRKVISFKGCLVQIFLLHFFGGSEMVILIAMGFDRYIAICKPLHYTTIMCGNACVGIMAVAWGIGFLHSVSQLAFAVHLPFCGPNEVDSFYCDLPRVIKLACTDTYRLDIMVIANSGVLTVCSFVLLIISYTIILMTIQHCPLDKSSKALSTLTAHITVVLLFFGPCVFIYAWPFPIKSLDKFLAVFYSVITPLLNPIIYTLRNKDMKTAIRRLRKWDAHSSVKF</sequence>
<organism>
    <name type="scientific">Homo sapiens</name>
    <name type="common">Human</name>
    <dbReference type="NCBI Taxonomy" id="9606"/>
    <lineage>
        <taxon>Eukaryota</taxon>
        <taxon>Metazoa</taxon>
        <taxon>Chordata</taxon>
        <taxon>Craniata</taxon>
        <taxon>Vertebrata</taxon>
        <taxon>Euteleostomi</taxon>
        <taxon>Mammalia</taxon>
        <taxon>Eutheria</taxon>
        <taxon>Euarchontoglires</taxon>
        <taxon>Primates</taxon>
        <taxon>Haplorrhini</taxon>
        <taxon>Catarrhini</taxon>
        <taxon>Hominidae</taxon>
        <taxon>Homo</taxon>
    </lineage>
</organism>
<evidence type="ECO:0000255" key="1"/>
<evidence type="ECO:0000255" key="2">
    <source>
        <dbReference type="PROSITE-ProRule" id="PRU00521"/>
    </source>
</evidence>
<evidence type="ECO:0000305" key="3"/>
<feature type="chain" id="PRO_0000150546" description="Olfactory receptor 4F4">
    <location>
        <begin position="1"/>
        <end position="305"/>
    </location>
</feature>
<feature type="topological domain" description="Extracellular" evidence="1">
    <location>
        <begin position="1"/>
        <end position="18"/>
    </location>
</feature>
<feature type="transmembrane region" description="Helical; Name=1" evidence="1">
    <location>
        <begin position="19"/>
        <end position="42"/>
    </location>
</feature>
<feature type="topological domain" description="Cytoplasmic" evidence="1">
    <location>
        <begin position="43"/>
        <end position="50"/>
    </location>
</feature>
<feature type="transmembrane region" description="Helical; Name=2" evidence="1">
    <location>
        <begin position="51"/>
        <end position="72"/>
    </location>
</feature>
<feature type="topological domain" description="Extracellular" evidence="1">
    <location>
        <begin position="73"/>
        <end position="93"/>
    </location>
</feature>
<feature type="transmembrane region" description="Helical; Name=3" evidence="1">
    <location>
        <begin position="94"/>
        <end position="113"/>
    </location>
</feature>
<feature type="topological domain" description="Cytoplasmic" evidence="1">
    <location>
        <begin position="114"/>
        <end position="132"/>
    </location>
</feature>
<feature type="transmembrane region" description="Helical; Name=4" evidence="1">
    <location>
        <begin position="133"/>
        <end position="151"/>
    </location>
</feature>
<feature type="topological domain" description="Extracellular" evidence="1">
    <location>
        <begin position="152"/>
        <end position="188"/>
    </location>
</feature>
<feature type="transmembrane region" description="Helical; Name=5" evidence="1">
    <location>
        <begin position="189"/>
        <end position="212"/>
    </location>
</feature>
<feature type="topological domain" description="Cytoplasmic" evidence="1">
    <location>
        <begin position="213"/>
        <end position="228"/>
    </location>
</feature>
<feature type="transmembrane region" description="Helical; Name=6" evidence="1">
    <location>
        <begin position="229"/>
        <end position="251"/>
    </location>
</feature>
<feature type="topological domain" description="Extracellular" evidence="1">
    <location>
        <begin position="252"/>
        <end position="262"/>
    </location>
</feature>
<feature type="transmembrane region" description="Helical; Name=7" evidence="1">
    <location>
        <begin position="263"/>
        <end position="282"/>
    </location>
</feature>
<feature type="topological domain" description="Cytoplasmic" evidence="1">
    <location>
        <begin position="283"/>
        <end position="305"/>
    </location>
</feature>
<feature type="disulfide bond" evidence="2">
    <location>
        <begin position="90"/>
        <end position="182"/>
    </location>
</feature>
<name>OR4F4_HUMAN</name>
<protein>
    <recommendedName>
        <fullName>Olfactory receptor 4F4</fullName>
    </recommendedName>
    <alternativeName>
        <fullName>HS14a-1-A</fullName>
    </alternativeName>
    <alternativeName>
        <fullName>Olfactory receptor OR19-3</fullName>
    </alternativeName>
</protein>
<proteinExistence type="evidence at transcript level"/>
<keyword id="KW-1003">Cell membrane</keyword>
<keyword id="KW-1015">Disulfide bond</keyword>
<keyword id="KW-0297">G-protein coupled receptor</keyword>
<keyword id="KW-0472">Membrane</keyword>
<keyword id="KW-0552">Olfaction</keyword>
<keyword id="KW-0675">Receptor</keyword>
<keyword id="KW-1185">Reference proteome</keyword>
<keyword id="KW-0716">Sensory transduction</keyword>
<keyword id="KW-0807">Transducer</keyword>
<keyword id="KW-0812">Transmembrane</keyword>
<keyword id="KW-1133">Transmembrane helix</keyword>
<reference key="1">
    <citation type="journal article" date="1998" name="Hum. Mol. Genet.">
        <title>Members of the olfactory receptor gene family are contained in large blocks of DNA duplicated polymorphically near the ends of human chromosomes.</title>
        <authorList>
            <person name="Trask B.J."/>
            <person name="Friedman C."/>
            <person name="Martin-Gallardo A."/>
            <person name="Rowen L."/>
            <person name="Akinbami C."/>
            <person name="Blankenship J."/>
            <person name="Collins C."/>
            <person name="Giorgi D."/>
            <person name="Iadonato S."/>
            <person name="Johnson F."/>
            <person name="Kuo W.L."/>
            <person name="Massa H."/>
            <person name="Morrish T."/>
            <person name="Naylor S."/>
            <person name="Nguyen O.T."/>
            <person name="Rouquier S."/>
            <person name="Smith T."/>
            <person name="Wong D.J."/>
            <person name="Youngblom J."/>
            <person name="van den Engh G."/>
        </authorList>
    </citation>
    <scope>NUCLEOTIDE SEQUENCE [GENOMIC DNA]</scope>
</reference>
<reference key="2">
    <citation type="journal article" date="2004" name="Genome Res.">
        <title>The status, quality, and expansion of the NIH full-length cDNA project: the Mammalian Gene Collection (MGC).</title>
        <authorList>
            <consortium name="The MGC Project Team"/>
        </authorList>
    </citation>
    <scope>NUCLEOTIDE SEQUENCE [LARGE SCALE MRNA]</scope>
</reference>
<reference key="3">
    <citation type="journal article" date="2002" name="Genomics">
        <title>DEFOG: a practical scheme for deciphering families of genes.</title>
        <authorList>
            <person name="Fuchs T."/>
            <person name="Malecova B."/>
            <person name="Linhart C."/>
            <person name="Sharan R."/>
            <person name="Khen M."/>
            <person name="Herwig R."/>
            <person name="Shmulevich D."/>
            <person name="Elkon R."/>
            <person name="Steinfath M."/>
            <person name="O'Brien J.K."/>
            <person name="Radelof U."/>
            <person name="Lehrach H."/>
            <person name="Lancet D."/>
            <person name="Shamir R."/>
        </authorList>
    </citation>
    <scope>NUCLEOTIDE SEQUENCE [GENOMIC DNA] OF 61-274</scope>
</reference>
<reference key="4">
    <citation type="journal article" date="2004" name="Proc. Natl. Acad. Sci. U.S.A.">
        <title>The human olfactory receptor gene family.</title>
        <authorList>
            <person name="Malnic B."/>
            <person name="Godfrey P.A."/>
            <person name="Buck L.B."/>
        </authorList>
    </citation>
    <scope>IDENTIFICATION</scope>
</reference>
<reference key="5">
    <citation type="journal article" date="2004" name="Proc. Natl. Acad. Sci. U.S.A.">
        <authorList>
            <person name="Malnic B."/>
            <person name="Godfrey P.A."/>
            <person name="Buck L.B."/>
        </authorList>
    </citation>
    <scope>ERRATUM OF PUBMED:14983052</scope>
</reference>
<gene>
    <name type="primary">OR4F4</name>
</gene>